<gene>
    <name type="primary">Mrps25</name>
    <name type="synonym">Rpms25</name>
</gene>
<sequence length="171" mass="19920">MPMKGRFPIRRTLQYLGRGDVVFKESVKIMTVNYNTYGELGEGARKFVFFNIPQIQYKNPWVQIMMFKNMTPSPFLRFYLDSGEQVLVDVETKSNKEIMEHIKKILGKKEETLREEELEKQQRFHPGNFGPRKYCLRECMCEVEGQVPCPGLVPLPKEMTGKYKAALKAST</sequence>
<reference key="1">
    <citation type="journal article" date="2005" name="Science">
        <title>The transcriptional landscape of the mammalian genome.</title>
        <authorList>
            <person name="Carninci P."/>
            <person name="Kasukawa T."/>
            <person name="Katayama S."/>
            <person name="Gough J."/>
            <person name="Frith M.C."/>
            <person name="Maeda N."/>
            <person name="Oyama R."/>
            <person name="Ravasi T."/>
            <person name="Lenhard B."/>
            <person name="Wells C."/>
            <person name="Kodzius R."/>
            <person name="Shimokawa K."/>
            <person name="Bajic V.B."/>
            <person name="Brenner S.E."/>
            <person name="Batalov S."/>
            <person name="Forrest A.R."/>
            <person name="Zavolan M."/>
            <person name="Davis M.J."/>
            <person name="Wilming L.G."/>
            <person name="Aidinis V."/>
            <person name="Allen J.E."/>
            <person name="Ambesi-Impiombato A."/>
            <person name="Apweiler R."/>
            <person name="Aturaliya R.N."/>
            <person name="Bailey T.L."/>
            <person name="Bansal M."/>
            <person name="Baxter L."/>
            <person name="Beisel K.W."/>
            <person name="Bersano T."/>
            <person name="Bono H."/>
            <person name="Chalk A.M."/>
            <person name="Chiu K.P."/>
            <person name="Choudhary V."/>
            <person name="Christoffels A."/>
            <person name="Clutterbuck D.R."/>
            <person name="Crowe M.L."/>
            <person name="Dalla E."/>
            <person name="Dalrymple B.P."/>
            <person name="de Bono B."/>
            <person name="Della Gatta G."/>
            <person name="di Bernardo D."/>
            <person name="Down T."/>
            <person name="Engstrom P."/>
            <person name="Fagiolini M."/>
            <person name="Faulkner G."/>
            <person name="Fletcher C.F."/>
            <person name="Fukushima T."/>
            <person name="Furuno M."/>
            <person name="Futaki S."/>
            <person name="Gariboldi M."/>
            <person name="Georgii-Hemming P."/>
            <person name="Gingeras T.R."/>
            <person name="Gojobori T."/>
            <person name="Green R.E."/>
            <person name="Gustincich S."/>
            <person name="Harbers M."/>
            <person name="Hayashi Y."/>
            <person name="Hensch T.K."/>
            <person name="Hirokawa N."/>
            <person name="Hill D."/>
            <person name="Huminiecki L."/>
            <person name="Iacono M."/>
            <person name="Ikeo K."/>
            <person name="Iwama A."/>
            <person name="Ishikawa T."/>
            <person name="Jakt M."/>
            <person name="Kanapin A."/>
            <person name="Katoh M."/>
            <person name="Kawasawa Y."/>
            <person name="Kelso J."/>
            <person name="Kitamura H."/>
            <person name="Kitano H."/>
            <person name="Kollias G."/>
            <person name="Krishnan S.P."/>
            <person name="Kruger A."/>
            <person name="Kummerfeld S.K."/>
            <person name="Kurochkin I.V."/>
            <person name="Lareau L.F."/>
            <person name="Lazarevic D."/>
            <person name="Lipovich L."/>
            <person name="Liu J."/>
            <person name="Liuni S."/>
            <person name="McWilliam S."/>
            <person name="Madan Babu M."/>
            <person name="Madera M."/>
            <person name="Marchionni L."/>
            <person name="Matsuda H."/>
            <person name="Matsuzawa S."/>
            <person name="Miki H."/>
            <person name="Mignone F."/>
            <person name="Miyake S."/>
            <person name="Morris K."/>
            <person name="Mottagui-Tabar S."/>
            <person name="Mulder N."/>
            <person name="Nakano N."/>
            <person name="Nakauchi H."/>
            <person name="Ng P."/>
            <person name="Nilsson R."/>
            <person name="Nishiguchi S."/>
            <person name="Nishikawa S."/>
            <person name="Nori F."/>
            <person name="Ohara O."/>
            <person name="Okazaki Y."/>
            <person name="Orlando V."/>
            <person name="Pang K.C."/>
            <person name="Pavan W.J."/>
            <person name="Pavesi G."/>
            <person name="Pesole G."/>
            <person name="Petrovsky N."/>
            <person name="Piazza S."/>
            <person name="Reed J."/>
            <person name="Reid J.F."/>
            <person name="Ring B.Z."/>
            <person name="Ringwald M."/>
            <person name="Rost B."/>
            <person name="Ruan Y."/>
            <person name="Salzberg S.L."/>
            <person name="Sandelin A."/>
            <person name="Schneider C."/>
            <person name="Schoenbach C."/>
            <person name="Sekiguchi K."/>
            <person name="Semple C.A."/>
            <person name="Seno S."/>
            <person name="Sessa L."/>
            <person name="Sheng Y."/>
            <person name="Shibata Y."/>
            <person name="Shimada H."/>
            <person name="Shimada K."/>
            <person name="Silva D."/>
            <person name="Sinclair B."/>
            <person name="Sperling S."/>
            <person name="Stupka E."/>
            <person name="Sugiura K."/>
            <person name="Sultana R."/>
            <person name="Takenaka Y."/>
            <person name="Taki K."/>
            <person name="Tammoja K."/>
            <person name="Tan S.L."/>
            <person name="Tang S."/>
            <person name="Taylor M.S."/>
            <person name="Tegner J."/>
            <person name="Teichmann S.A."/>
            <person name="Ueda H.R."/>
            <person name="van Nimwegen E."/>
            <person name="Verardo R."/>
            <person name="Wei C.L."/>
            <person name="Yagi K."/>
            <person name="Yamanishi H."/>
            <person name="Zabarovsky E."/>
            <person name="Zhu S."/>
            <person name="Zimmer A."/>
            <person name="Hide W."/>
            <person name="Bult C."/>
            <person name="Grimmond S.M."/>
            <person name="Teasdale R.D."/>
            <person name="Liu E.T."/>
            <person name="Brusic V."/>
            <person name="Quackenbush J."/>
            <person name="Wahlestedt C."/>
            <person name="Mattick J.S."/>
            <person name="Hume D.A."/>
            <person name="Kai C."/>
            <person name="Sasaki D."/>
            <person name="Tomaru Y."/>
            <person name="Fukuda S."/>
            <person name="Kanamori-Katayama M."/>
            <person name="Suzuki M."/>
            <person name="Aoki J."/>
            <person name="Arakawa T."/>
            <person name="Iida J."/>
            <person name="Imamura K."/>
            <person name="Itoh M."/>
            <person name="Kato T."/>
            <person name="Kawaji H."/>
            <person name="Kawagashira N."/>
            <person name="Kawashima T."/>
            <person name="Kojima M."/>
            <person name="Kondo S."/>
            <person name="Konno H."/>
            <person name="Nakano K."/>
            <person name="Ninomiya N."/>
            <person name="Nishio T."/>
            <person name="Okada M."/>
            <person name="Plessy C."/>
            <person name="Shibata K."/>
            <person name="Shiraki T."/>
            <person name="Suzuki S."/>
            <person name="Tagami M."/>
            <person name="Waki K."/>
            <person name="Watahiki A."/>
            <person name="Okamura-Oho Y."/>
            <person name="Suzuki H."/>
            <person name="Kawai J."/>
            <person name="Hayashizaki Y."/>
        </authorList>
    </citation>
    <scope>NUCLEOTIDE SEQUENCE [LARGE SCALE MRNA]</scope>
    <source>
        <strain>C57BL/6J</strain>
        <tissue>Embryo</tissue>
    </source>
</reference>
<reference key="2">
    <citation type="journal article" date="2004" name="Genome Res.">
        <title>The status, quality, and expansion of the NIH full-length cDNA project: the Mammalian Gene Collection (MGC).</title>
        <authorList>
            <consortium name="The MGC Project Team"/>
        </authorList>
    </citation>
    <scope>NUCLEOTIDE SEQUENCE [LARGE SCALE MRNA]</scope>
    <source>
        <strain>FVB/N</strain>
        <tissue>Liver</tissue>
    </source>
</reference>
<reference key="3">
    <citation type="submission" date="2009-01" db="UniProtKB">
        <authorList>
            <person name="Lubec G."/>
            <person name="Sunyer B."/>
            <person name="Chen W.-Q."/>
        </authorList>
    </citation>
    <scope>PROTEIN SEQUENCE OF 12-18</scope>
    <scope>IDENTIFICATION BY MASS SPECTROMETRY</scope>
    <source>
        <strain>OF1</strain>
        <tissue>Hippocampus</tissue>
    </source>
</reference>
<reference key="4">
    <citation type="journal article" date="2010" name="Cell">
        <title>A tissue-specific atlas of mouse protein phosphorylation and expression.</title>
        <authorList>
            <person name="Huttlin E.L."/>
            <person name="Jedrychowski M.P."/>
            <person name="Elias J.E."/>
            <person name="Goswami T."/>
            <person name="Rad R."/>
            <person name="Beausoleil S.A."/>
            <person name="Villen J."/>
            <person name="Haas W."/>
            <person name="Sowa M.E."/>
            <person name="Gygi S.P."/>
        </authorList>
    </citation>
    <scope>IDENTIFICATION BY MASS SPECTROMETRY [LARGE SCALE ANALYSIS]</scope>
    <source>
        <tissue>Brain</tissue>
        <tissue>Brown adipose tissue</tissue>
        <tissue>Heart</tissue>
        <tissue>Kidney</tissue>
        <tissue>Liver</tissue>
        <tissue>Lung</tissue>
        <tissue>Spleen</tissue>
        <tissue>Testis</tissue>
    </source>
</reference>
<organism>
    <name type="scientific">Mus musculus</name>
    <name type="common">Mouse</name>
    <dbReference type="NCBI Taxonomy" id="10090"/>
    <lineage>
        <taxon>Eukaryota</taxon>
        <taxon>Metazoa</taxon>
        <taxon>Chordata</taxon>
        <taxon>Craniata</taxon>
        <taxon>Vertebrata</taxon>
        <taxon>Euteleostomi</taxon>
        <taxon>Mammalia</taxon>
        <taxon>Eutheria</taxon>
        <taxon>Euarchontoglires</taxon>
        <taxon>Glires</taxon>
        <taxon>Rodentia</taxon>
        <taxon>Myomorpha</taxon>
        <taxon>Muroidea</taxon>
        <taxon>Muridae</taxon>
        <taxon>Murinae</taxon>
        <taxon>Mus</taxon>
        <taxon>Mus</taxon>
    </lineage>
</organism>
<keyword id="KW-0002">3D-structure</keyword>
<keyword id="KW-0903">Direct protein sequencing</keyword>
<keyword id="KW-0496">Mitochondrion</keyword>
<keyword id="KW-1185">Reference proteome</keyword>
<keyword id="KW-0687">Ribonucleoprotein</keyword>
<keyword id="KW-0689">Ribosomal protein</keyword>
<name>RT25_MOUSE</name>
<feature type="chain" id="PRO_0000087709" description="Small ribosomal subunit protein mS25">
    <location>
        <begin position="1"/>
        <end position="171"/>
    </location>
</feature>
<feature type="sequence conflict" description="In Ref. 1; BAB28705." evidence="2" ref="1">
    <original>P</original>
    <variation>S</variation>
    <location>
        <position position="60"/>
    </location>
</feature>
<comment type="subunit">
    <text evidence="1">Component of the mitochondrial ribosome small subunit (28S) which comprises a 12S rRNA and about 30 distinct proteins.</text>
</comment>
<comment type="subcellular location">
    <subcellularLocation>
        <location evidence="1">Mitochondrion</location>
    </subcellularLocation>
</comment>
<comment type="similarity">
    <text evidence="2">Belongs to the mitochondrion-specific ribosomal protein mS25 family.</text>
</comment>
<dbReference type="EMBL" id="AK004037">
    <property type="protein sequence ID" value="BAB23136.1"/>
    <property type="molecule type" value="mRNA"/>
</dbReference>
<dbReference type="EMBL" id="AK013196">
    <property type="protein sequence ID" value="BAB28705.1"/>
    <property type="molecule type" value="mRNA"/>
</dbReference>
<dbReference type="EMBL" id="BC022953">
    <property type="protein sequence ID" value="AAH22953.1"/>
    <property type="molecule type" value="mRNA"/>
</dbReference>
<dbReference type="CCDS" id="CCDS20373.1"/>
<dbReference type="RefSeq" id="NP_079854.2">
    <property type="nucleotide sequence ID" value="NM_025578.4"/>
</dbReference>
<dbReference type="PDB" id="7PNT">
    <property type="method" value="EM"/>
    <property type="resolution" value="3.19 A"/>
    <property type="chains" value="T=1-171"/>
</dbReference>
<dbReference type="PDB" id="7PNU">
    <property type="method" value="EM"/>
    <property type="resolution" value="3.06 A"/>
    <property type="chains" value="T=1-171"/>
</dbReference>
<dbReference type="PDB" id="7PNV">
    <property type="method" value="EM"/>
    <property type="resolution" value="3.06 A"/>
    <property type="chains" value="T=1-171"/>
</dbReference>
<dbReference type="PDB" id="7PNW">
    <property type="method" value="EM"/>
    <property type="resolution" value="3.09 A"/>
    <property type="chains" value="T=1-171"/>
</dbReference>
<dbReference type="PDBsum" id="7PNT"/>
<dbReference type="PDBsum" id="7PNU"/>
<dbReference type="PDBsum" id="7PNV"/>
<dbReference type="PDBsum" id="7PNW"/>
<dbReference type="EMDB" id="EMD-13551"/>
<dbReference type="EMDB" id="EMD-13552"/>
<dbReference type="EMDB" id="EMD-13553"/>
<dbReference type="EMDB" id="EMD-13554"/>
<dbReference type="SMR" id="Q9D125"/>
<dbReference type="BioGRID" id="211094">
    <property type="interactions" value="6"/>
</dbReference>
<dbReference type="ComplexPortal" id="CPX-5301">
    <property type="entry name" value="28S mitochondrial small ribosomal subunit"/>
</dbReference>
<dbReference type="FunCoup" id="Q9D125">
    <property type="interactions" value="1973"/>
</dbReference>
<dbReference type="STRING" id="10090.ENSMUSP00000114402"/>
<dbReference type="iPTMnet" id="Q9D125"/>
<dbReference type="PhosphoSitePlus" id="Q9D125"/>
<dbReference type="SwissPalm" id="Q9D125"/>
<dbReference type="PaxDb" id="10090-ENSMUSP00000114402"/>
<dbReference type="ProteomicsDB" id="256636"/>
<dbReference type="Pumba" id="Q9D125"/>
<dbReference type="Antibodypedia" id="26653">
    <property type="antibodies" value="264 antibodies from 28 providers"/>
</dbReference>
<dbReference type="DNASU" id="64658"/>
<dbReference type="Ensembl" id="ENSMUST00000140438.2">
    <property type="protein sequence ID" value="ENSMUSP00000114402.2"/>
    <property type="gene ID" value="ENSMUSG00000014551.9"/>
</dbReference>
<dbReference type="GeneID" id="64658"/>
<dbReference type="KEGG" id="mmu:64658"/>
<dbReference type="UCSC" id="uc009cyu.1">
    <property type="organism name" value="mouse"/>
</dbReference>
<dbReference type="AGR" id="MGI:1928140"/>
<dbReference type="CTD" id="64432"/>
<dbReference type="MGI" id="MGI:1928140">
    <property type="gene designation" value="Mrps25"/>
</dbReference>
<dbReference type="VEuPathDB" id="HostDB:ENSMUSG00000014551"/>
<dbReference type="eggNOG" id="KOG4079">
    <property type="taxonomic scope" value="Eukaryota"/>
</dbReference>
<dbReference type="GeneTree" id="ENSGT00640000091558"/>
<dbReference type="HOGENOM" id="CLU_094727_0_0_1"/>
<dbReference type="InParanoid" id="Q9D125"/>
<dbReference type="OMA" id="DHKQISQ"/>
<dbReference type="OrthoDB" id="5919182at2759"/>
<dbReference type="PhylomeDB" id="Q9D125"/>
<dbReference type="TreeFam" id="TF300292"/>
<dbReference type="Reactome" id="R-MMU-5389840">
    <property type="pathway name" value="Mitochondrial translation elongation"/>
</dbReference>
<dbReference type="Reactome" id="R-MMU-5419276">
    <property type="pathway name" value="Mitochondrial translation termination"/>
</dbReference>
<dbReference type="BioGRID-ORCS" id="64658">
    <property type="hits" value="25 hits in 78 CRISPR screens"/>
</dbReference>
<dbReference type="ChiTaRS" id="Mrps25">
    <property type="organism name" value="mouse"/>
</dbReference>
<dbReference type="PRO" id="PR:Q9D125"/>
<dbReference type="Proteomes" id="UP000000589">
    <property type="component" value="Chromosome 6"/>
</dbReference>
<dbReference type="RNAct" id="Q9D125">
    <property type="molecule type" value="protein"/>
</dbReference>
<dbReference type="Bgee" id="ENSMUSG00000014551">
    <property type="expression patterns" value="Expressed in ileal epithelium and 263 other cell types or tissues"/>
</dbReference>
<dbReference type="GO" id="GO:0005743">
    <property type="term" value="C:mitochondrial inner membrane"/>
    <property type="evidence" value="ECO:0000303"/>
    <property type="project" value="ComplexPortal"/>
</dbReference>
<dbReference type="GO" id="GO:0005763">
    <property type="term" value="C:mitochondrial small ribosomal subunit"/>
    <property type="evidence" value="ECO:0000250"/>
    <property type="project" value="UniProtKB"/>
</dbReference>
<dbReference type="GO" id="GO:0005739">
    <property type="term" value="C:mitochondrion"/>
    <property type="evidence" value="ECO:0007005"/>
    <property type="project" value="MGI"/>
</dbReference>
<dbReference type="GO" id="GO:0003735">
    <property type="term" value="F:structural constituent of ribosome"/>
    <property type="evidence" value="ECO:0000266"/>
    <property type="project" value="MGI"/>
</dbReference>
<dbReference type="GO" id="GO:0032543">
    <property type="term" value="P:mitochondrial translation"/>
    <property type="evidence" value="ECO:0000303"/>
    <property type="project" value="ComplexPortal"/>
</dbReference>
<dbReference type="FunFam" id="3.40.30.10:FF:000103">
    <property type="entry name" value="28S ribosomal protein S25, mitochondrial"/>
    <property type="match status" value="1"/>
</dbReference>
<dbReference type="Gene3D" id="3.40.30.10">
    <property type="entry name" value="Glutaredoxin"/>
    <property type="match status" value="1"/>
</dbReference>
<dbReference type="InterPro" id="IPR007741">
    <property type="entry name" value="Ribosomal_mL43/mS25/NADH_DH"/>
</dbReference>
<dbReference type="InterPro" id="IPR040049">
    <property type="entry name" value="Ribosomal_mS25/mL61"/>
</dbReference>
<dbReference type="InterPro" id="IPR036249">
    <property type="entry name" value="Thioredoxin-like_sf"/>
</dbReference>
<dbReference type="PANTHER" id="PTHR13274">
    <property type="entry name" value="MITOCHONDRIAL RIBOSOMAL PROTEIN S25"/>
    <property type="match status" value="1"/>
</dbReference>
<dbReference type="PANTHER" id="PTHR13274:SF2">
    <property type="entry name" value="SMALL RIBOSOMAL SUBUNIT PROTEIN MS25"/>
    <property type="match status" value="1"/>
</dbReference>
<dbReference type="Pfam" id="PF05047">
    <property type="entry name" value="L51_S25_CI-B8"/>
    <property type="match status" value="1"/>
</dbReference>
<dbReference type="SMART" id="SM00916">
    <property type="entry name" value="L51_S25_CI-B8"/>
    <property type="match status" value="1"/>
</dbReference>
<dbReference type="SUPFAM" id="SSF52833">
    <property type="entry name" value="Thioredoxin-like"/>
    <property type="match status" value="1"/>
</dbReference>
<accession>Q9D125</accession>
<accession>Q9CYY8</accession>
<proteinExistence type="evidence at protein level"/>
<protein>
    <recommendedName>
        <fullName evidence="2">Small ribosomal subunit protein mS25</fullName>
    </recommendedName>
    <alternativeName>
        <fullName>28S ribosomal protein S25, mitochondrial</fullName>
        <shortName>MRP-S25</shortName>
        <shortName>S25mt</shortName>
    </alternativeName>
</protein>
<evidence type="ECO:0000250" key="1">
    <source>
        <dbReference type="UniProtKB" id="P82669"/>
    </source>
</evidence>
<evidence type="ECO:0000305" key="2"/>